<dbReference type="EMBL" id="U41733">
    <property type="protein sequence ID" value="AAB03262.1"/>
    <property type="molecule type" value="mRNA"/>
</dbReference>
<dbReference type="RefSeq" id="NP_999025.1">
    <property type="nucleotide sequence ID" value="NM_213860.1"/>
</dbReference>
<dbReference type="SMR" id="Q28987"/>
<dbReference type="FunCoup" id="Q28987">
    <property type="interactions" value="105"/>
</dbReference>
<dbReference type="STRING" id="9823.ENSSSCP00000035013"/>
<dbReference type="MEROPS" id="I25.001"/>
<dbReference type="PaxDb" id="9823-ENSSSCP00000027834"/>
<dbReference type="Ensembl" id="ENSSSCT00000023416.4">
    <property type="protein sequence ID" value="ENSSSCP00000027834.4"/>
    <property type="gene ID" value="ENSSSCG00000028871.4"/>
</dbReference>
<dbReference type="Ensembl" id="ENSSSCT00045036833.1">
    <property type="protein sequence ID" value="ENSSSCP00045025617.1"/>
    <property type="gene ID" value="ENSSSCG00045021547.1"/>
</dbReference>
<dbReference type="GeneID" id="396867"/>
<dbReference type="KEGG" id="ssc:396867"/>
<dbReference type="eggNOG" id="ENOG502SF2X">
    <property type="taxonomic scope" value="Eukaryota"/>
</dbReference>
<dbReference type="GeneTree" id="ENSGT00940000155717"/>
<dbReference type="InParanoid" id="Q28987"/>
<dbReference type="OrthoDB" id="2429551at2759"/>
<dbReference type="Proteomes" id="UP000008227">
    <property type="component" value="Chromosome 13"/>
</dbReference>
<dbReference type="Proteomes" id="UP000314985">
    <property type="component" value="Unplaced"/>
</dbReference>
<dbReference type="Proteomes" id="UP000694570">
    <property type="component" value="Unplaced"/>
</dbReference>
<dbReference type="Proteomes" id="UP000694571">
    <property type="component" value="Unplaced"/>
</dbReference>
<dbReference type="Proteomes" id="UP000694720">
    <property type="component" value="Unplaced"/>
</dbReference>
<dbReference type="Proteomes" id="UP000694722">
    <property type="component" value="Unplaced"/>
</dbReference>
<dbReference type="Proteomes" id="UP000694723">
    <property type="component" value="Unplaced"/>
</dbReference>
<dbReference type="Proteomes" id="UP000694724">
    <property type="component" value="Unplaced"/>
</dbReference>
<dbReference type="Proteomes" id="UP000694725">
    <property type="component" value="Unplaced"/>
</dbReference>
<dbReference type="Proteomes" id="UP000694726">
    <property type="component" value="Unplaced"/>
</dbReference>
<dbReference type="Proteomes" id="UP000694727">
    <property type="component" value="Unplaced"/>
</dbReference>
<dbReference type="Proteomes" id="UP000694728">
    <property type="component" value="Unplaced"/>
</dbReference>
<dbReference type="Bgee" id="ENSSSCG00000028871">
    <property type="expression patterns" value="Expressed in penis and 30 other cell types or tissues"/>
</dbReference>
<dbReference type="ExpressionAtlas" id="Q28987">
    <property type="expression patterns" value="baseline and differential"/>
</dbReference>
<dbReference type="GO" id="GO:0005829">
    <property type="term" value="C:cytosol"/>
    <property type="evidence" value="ECO:0000318"/>
    <property type="project" value="GO_Central"/>
</dbReference>
<dbReference type="GO" id="GO:0004869">
    <property type="term" value="F:cysteine-type endopeptidase inhibitor activity"/>
    <property type="evidence" value="ECO:0000318"/>
    <property type="project" value="GO_Central"/>
</dbReference>
<dbReference type="CDD" id="cd00042">
    <property type="entry name" value="CY"/>
    <property type="match status" value="1"/>
</dbReference>
<dbReference type="FunFam" id="3.10.450.10:FF:000001">
    <property type="entry name" value="Cystatin-A"/>
    <property type="match status" value="1"/>
</dbReference>
<dbReference type="Gene3D" id="3.10.450.10">
    <property type="match status" value="1"/>
</dbReference>
<dbReference type="InterPro" id="IPR000010">
    <property type="entry name" value="Cystatin_dom"/>
</dbReference>
<dbReference type="InterPro" id="IPR046350">
    <property type="entry name" value="Cystatin_sf"/>
</dbReference>
<dbReference type="InterPro" id="IPR018073">
    <property type="entry name" value="Prot_inh_cystat_CS"/>
</dbReference>
<dbReference type="InterPro" id="IPR001713">
    <property type="entry name" value="Prot_inh_stefin"/>
</dbReference>
<dbReference type="PANTHER" id="PTHR11414">
    <property type="entry name" value="CYSTATIN FAMILY MEMBER"/>
    <property type="match status" value="1"/>
</dbReference>
<dbReference type="PANTHER" id="PTHR11414:SF20">
    <property type="entry name" value="CYSTATIN-A"/>
    <property type="match status" value="1"/>
</dbReference>
<dbReference type="Pfam" id="PF00031">
    <property type="entry name" value="Cystatin"/>
    <property type="match status" value="1"/>
</dbReference>
<dbReference type="PRINTS" id="PR00295">
    <property type="entry name" value="STEFINA"/>
</dbReference>
<dbReference type="SMART" id="SM00043">
    <property type="entry name" value="CY"/>
    <property type="match status" value="1"/>
</dbReference>
<dbReference type="SUPFAM" id="SSF54403">
    <property type="entry name" value="Cystatin/monellin"/>
    <property type="match status" value="1"/>
</dbReference>
<dbReference type="PROSITE" id="PS00287">
    <property type="entry name" value="CYSTATIN"/>
    <property type="match status" value="1"/>
</dbReference>
<organism>
    <name type="scientific">Sus scrofa</name>
    <name type="common">Pig</name>
    <dbReference type="NCBI Taxonomy" id="9823"/>
    <lineage>
        <taxon>Eukaryota</taxon>
        <taxon>Metazoa</taxon>
        <taxon>Chordata</taxon>
        <taxon>Craniata</taxon>
        <taxon>Vertebrata</taxon>
        <taxon>Euteleostomi</taxon>
        <taxon>Mammalia</taxon>
        <taxon>Eutheria</taxon>
        <taxon>Laurasiatheria</taxon>
        <taxon>Artiodactyla</taxon>
        <taxon>Suina</taxon>
        <taxon>Suidae</taxon>
        <taxon>Sus</taxon>
    </lineage>
</organism>
<accession>Q28987</accession>
<protein>
    <recommendedName>
        <fullName>Cystatin-A8</fullName>
    </recommendedName>
    <alternativeName>
        <fullName>Stefin-A8</fullName>
    </alternativeName>
</protein>
<evidence type="ECO:0000250" key="1"/>
<evidence type="ECO:0000256" key="2">
    <source>
        <dbReference type="SAM" id="MobiDB-lite"/>
    </source>
</evidence>
<evidence type="ECO:0000305" key="3"/>
<sequence>MESEEMLAGGLTEPRPATPEIQEIANKVKPQLEEKTKKTYEKFEAIIYRSQVVAGTNYYIKVHVGGNSYVHIIVFQNLPQLNEPLKLIGYQVDKTKDDELTGF</sequence>
<comment type="function">
    <text>This is an intracellular thiol proteinase inhibitor.</text>
</comment>
<comment type="subcellular location">
    <subcellularLocation>
        <location>Cytoplasm</location>
    </subcellularLocation>
</comment>
<comment type="similarity">
    <text evidence="3">Belongs to the cystatin family.</text>
</comment>
<reference key="1">
    <citation type="submission" date="1995-12" db="EMBL/GenBank/DDBJ databases">
        <authorList>
            <person name="Pungercar J."/>
            <person name="Strukelj B."/>
        </authorList>
    </citation>
    <scope>NUCLEOTIDE SEQUENCE [MRNA]</scope>
    <source>
        <tissue>Bone marrow</tissue>
    </source>
</reference>
<feature type="chain" id="PRO_0000207132" description="Cystatin-A8">
    <location>
        <begin position="1"/>
        <end position="103"/>
    </location>
</feature>
<feature type="region of interest" description="Disordered" evidence="2">
    <location>
        <begin position="1"/>
        <end position="20"/>
    </location>
</feature>
<feature type="short sequence motif" description="Secondary area of contact">
    <location>
        <begin position="51"/>
        <end position="55"/>
    </location>
</feature>
<feature type="site" description="Reactive site" evidence="1">
    <location>
        <position position="10"/>
    </location>
</feature>
<keyword id="KW-0963">Cytoplasm</keyword>
<keyword id="KW-0646">Protease inhibitor</keyword>
<keyword id="KW-1185">Reference proteome</keyword>
<keyword id="KW-0789">Thiol protease inhibitor</keyword>
<name>CYTA8_PIG</name>
<proteinExistence type="inferred from homology"/>